<gene>
    <name evidence="1" type="primary">rpmH</name>
    <name type="ordered locus">CJE1041</name>
</gene>
<reference key="1">
    <citation type="journal article" date="2005" name="PLoS Biol.">
        <title>Major structural differences and novel potential virulence mechanisms from the genomes of multiple Campylobacter species.</title>
        <authorList>
            <person name="Fouts D.E."/>
            <person name="Mongodin E.F."/>
            <person name="Mandrell R.E."/>
            <person name="Miller W.G."/>
            <person name="Rasko D.A."/>
            <person name="Ravel J."/>
            <person name="Brinkac L.M."/>
            <person name="DeBoy R.T."/>
            <person name="Parker C.T."/>
            <person name="Daugherty S.C."/>
            <person name="Dodson R.J."/>
            <person name="Durkin A.S."/>
            <person name="Madupu R."/>
            <person name="Sullivan S.A."/>
            <person name="Shetty J.U."/>
            <person name="Ayodeji M.A."/>
            <person name="Shvartsbeyn A."/>
            <person name="Schatz M.C."/>
            <person name="Badger J.H."/>
            <person name="Fraser C.M."/>
            <person name="Nelson K.E."/>
        </authorList>
    </citation>
    <scope>NUCLEOTIDE SEQUENCE [LARGE SCALE GENOMIC DNA]</scope>
    <source>
        <strain>RM1221</strain>
    </source>
</reference>
<proteinExistence type="inferred from homology"/>
<organism>
    <name type="scientific">Campylobacter jejuni (strain RM1221)</name>
    <dbReference type="NCBI Taxonomy" id="195099"/>
    <lineage>
        <taxon>Bacteria</taxon>
        <taxon>Pseudomonadati</taxon>
        <taxon>Campylobacterota</taxon>
        <taxon>Epsilonproteobacteria</taxon>
        <taxon>Campylobacterales</taxon>
        <taxon>Campylobacteraceae</taxon>
        <taxon>Campylobacter</taxon>
    </lineage>
</organism>
<protein>
    <recommendedName>
        <fullName evidence="1">Large ribosomal subunit protein bL34</fullName>
    </recommendedName>
    <alternativeName>
        <fullName evidence="2">50S ribosomal protein L34</fullName>
    </alternativeName>
</protein>
<comment type="similarity">
    <text evidence="1">Belongs to the bacterial ribosomal protein bL34 family.</text>
</comment>
<accession>Q5HUJ8</accession>
<sequence>MKRTYQPHGTPRKRTHGFRVRMKTKNGRKVINARRAKGRKRLAV</sequence>
<feature type="chain" id="PRO_0000187361" description="Large ribosomal subunit protein bL34">
    <location>
        <begin position="1"/>
        <end position="44"/>
    </location>
</feature>
<name>RL34_CAMJR</name>
<evidence type="ECO:0000255" key="1">
    <source>
        <dbReference type="HAMAP-Rule" id="MF_00391"/>
    </source>
</evidence>
<evidence type="ECO:0000305" key="2"/>
<dbReference type="EMBL" id="CP000025">
    <property type="protein sequence ID" value="AAW35372.1"/>
    <property type="molecule type" value="Genomic_DNA"/>
</dbReference>
<dbReference type="RefSeq" id="WP_002776864.1">
    <property type="nucleotide sequence ID" value="NC_003912.7"/>
</dbReference>
<dbReference type="SMR" id="Q5HUJ8"/>
<dbReference type="GeneID" id="66544167"/>
<dbReference type="KEGG" id="cjr:CJE1041"/>
<dbReference type="HOGENOM" id="CLU_129938_2_0_7"/>
<dbReference type="GO" id="GO:1990904">
    <property type="term" value="C:ribonucleoprotein complex"/>
    <property type="evidence" value="ECO:0007669"/>
    <property type="project" value="UniProtKB-KW"/>
</dbReference>
<dbReference type="GO" id="GO:0005840">
    <property type="term" value="C:ribosome"/>
    <property type="evidence" value="ECO:0007669"/>
    <property type="project" value="UniProtKB-KW"/>
</dbReference>
<dbReference type="GO" id="GO:0003735">
    <property type="term" value="F:structural constituent of ribosome"/>
    <property type="evidence" value="ECO:0007669"/>
    <property type="project" value="InterPro"/>
</dbReference>
<dbReference type="GO" id="GO:0006412">
    <property type="term" value="P:translation"/>
    <property type="evidence" value="ECO:0007669"/>
    <property type="project" value="UniProtKB-UniRule"/>
</dbReference>
<dbReference type="FunFam" id="1.10.287.3980:FF:000001">
    <property type="entry name" value="Mitochondrial ribosomal protein L34"/>
    <property type="match status" value="1"/>
</dbReference>
<dbReference type="Gene3D" id="1.10.287.3980">
    <property type="match status" value="1"/>
</dbReference>
<dbReference type="HAMAP" id="MF_00391">
    <property type="entry name" value="Ribosomal_bL34"/>
    <property type="match status" value="1"/>
</dbReference>
<dbReference type="InterPro" id="IPR000271">
    <property type="entry name" value="Ribosomal_bL34"/>
</dbReference>
<dbReference type="InterPro" id="IPR020939">
    <property type="entry name" value="Ribosomal_bL34_CS"/>
</dbReference>
<dbReference type="NCBIfam" id="TIGR01030">
    <property type="entry name" value="rpmH_bact"/>
    <property type="match status" value="1"/>
</dbReference>
<dbReference type="PANTHER" id="PTHR14503:SF4">
    <property type="entry name" value="LARGE RIBOSOMAL SUBUNIT PROTEIN BL34M"/>
    <property type="match status" value="1"/>
</dbReference>
<dbReference type="PANTHER" id="PTHR14503">
    <property type="entry name" value="MITOCHONDRIAL RIBOSOMAL PROTEIN 34 FAMILY MEMBER"/>
    <property type="match status" value="1"/>
</dbReference>
<dbReference type="Pfam" id="PF00468">
    <property type="entry name" value="Ribosomal_L34"/>
    <property type="match status" value="1"/>
</dbReference>
<dbReference type="PROSITE" id="PS00784">
    <property type="entry name" value="RIBOSOMAL_L34"/>
    <property type="match status" value="1"/>
</dbReference>
<keyword id="KW-0687">Ribonucleoprotein</keyword>
<keyword id="KW-0689">Ribosomal protein</keyword>